<dbReference type="EC" id="6.1.1.5" evidence="1"/>
<dbReference type="EMBL" id="AE006914">
    <property type="protein sequence ID" value="AAL03491.1"/>
    <property type="status" value="ALT_INIT"/>
    <property type="molecule type" value="Genomic_DNA"/>
</dbReference>
<dbReference type="PIR" id="A97819">
    <property type="entry name" value="A97819"/>
</dbReference>
<dbReference type="RefSeq" id="WP_010977549.1">
    <property type="nucleotide sequence ID" value="NC_003103.1"/>
</dbReference>
<dbReference type="SMR" id="Q92H19"/>
<dbReference type="GeneID" id="927861"/>
<dbReference type="KEGG" id="rco:RC0953"/>
<dbReference type="PATRIC" id="fig|272944.4.peg.1086"/>
<dbReference type="HOGENOM" id="CLU_001493_1_1_5"/>
<dbReference type="Proteomes" id="UP000000816">
    <property type="component" value="Chromosome"/>
</dbReference>
<dbReference type="GO" id="GO:0005737">
    <property type="term" value="C:cytoplasm"/>
    <property type="evidence" value="ECO:0007669"/>
    <property type="project" value="UniProtKB-SubCell"/>
</dbReference>
<dbReference type="GO" id="GO:0002161">
    <property type="term" value="F:aminoacyl-tRNA deacylase activity"/>
    <property type="evidence" value="ECO:0007669"/>
    <property type="project" value="InterPro"/>
</dbReference>
<dbReference type="GO" id="GO:0005524">
    <property type="term" value="F:ATP binding"/>
    <property type="evidence" value="ECO:0007669"/>
    <property type="project" value="UniProtKB-UniRule"/>
</dbReference>
<dbReference type="GO" id="GO:0004822">
    <property type="term" value="F:isoleucine-tRNA ligase activity"/>
    <property type="evidence" value="ECO:0007669"/>
    <property type="project" value="UniProtKB-UniRule"/>
</dbReference>
<dbReference type="GO" id="GO:0000049">
    <property type="term" value="F:tRNA binding"/>
    <property type="evidence" value="ECO:0007669"/>
    <property type="project" value="InterPro"/>
</dbReference>
<dbReference type="GO" id="GO:0008270">
    <property type="term" value="F:zinc ion binding"/>
    <property type="evidence" value="ECO:0007669"/>
    <property type="project" value="UniProtKB-UniRule"/>
</dbReference>
<dbReference type="GO" id="GO:0006428">
    <property type="term" value="P:isoleucyl-tRNA aminoacylation"/>
    <property type="evidence" value="ECO:0007669"/>
    <property type="project" value="UniProtKB-UniRule"/>
</dbReference>
<dbReference type="CDD" id="cd07961">
    <property type="entry name" value="Anticodon_Ia_Ile_ABEc"/>
    <property type="match status" value="1"/>
</dbReference>
<dbReference type="CDD" id="cd00818">
    <property type="entry name" value="IleRS_core"/>
    <property type="match status" value="1"/>
</dbReference>
<dbReference type="FunFam" id="3.40.50.620:FF:000075">
    <property type="entry name" value="Isoleucine--tRNA ligase"/>
    <property type="match status" value="1"/>
</dbReference>
<dbReference type="FunFam" id="3.40.50.620:FF:000241">
    <property type="entry name" value="Isoleucine--tRNA ligase"/>
    <property type="match status" value="1"/>
</dbReference>
<dbReference type="Gene3D" id="3.40.50.620">
    <property type="entry name" value="HUPs"/>
    <property type="match status" value="2"/>
</dbReference>
<dbReference type="Gene3D" id="1.10.730.10">
    <property type="entry name" value="Isoleucyl-tRNA Synthetase, Domain 1"/>
    <property type="match status" value="1"/>
</dbReference>
<dbReference type="HAMAP" id="MF_02003">
    <property type="entry name" value="Ile_tRNA_synth_type2"/>
    <property type="match status" value="1"/>
</dbReference>
<dbReference type="InterPro" id="IPR001412">
    <property type="entry name" value="aa-tRNA-synth_I_CS"/>
</dbReference>
<dbReference type="InterPro" id="IPR002300">
    <property type="entry name" value="aa-tRNA-synth_Ia"/>
</dbReference>
<dbReference type="InterPro" id="IPR033709">
    <property type="entry name" value="Anticodon_Ile_ABEc"/>
</dbReference>
<dbReference type="InterPro" id="IPR002301">
    <property type="entry name" value="Ile-tRNA-ligase"/>
</dbReference>
<dbReference type="InterPro" id="IPR023586">
    <property type="entry name" value="Ile-tRNA-ligase_type2"/>
</dbReference>
<dbReference type="InterPro" id="IPR013155">
    <property type="entry name" value="M/V/L/I-tRNA-synth_anticd-bd"/>
</dbReference>
<dbReference type="InterPro" id="IPR014729">
    <property type="entry name" value="Rossmann-like_a/b/a_fold"/>
</dbReference>
<dbReference type="InterPro" id="IPR009080">
    <property type="entry name" value="tRNAsynth_Ia_anticodon-bd"/>
</dbReference>
<dbReference type="InterPro" id="IPR009008">
    <property type="entry name" value="Val/Leu/Ile-tRNA-synth_edit"/>
</dbReference>
<dbReference type="NCBIfam" id="TIGR00392">
    <property type="entry name" value="ileS"/>
    <property type="match status" value="1"/>
</dbReference>
<dbReference type="PANTHER" id="PTHR42780:SF1">
    <property type="entry name" value="ISOLEUCINE--TRNA LIGASE, CYTOPLASMIC"/>
    <property type="match status" value="1"/>
</dbReference>
<dbReference type="PANTHER" id="PTHR42780">
    <property type="entry name" value="SOLEUCYL-TRNA SYNTHETASE"/>
    <property type="match status" value="1"/>
</dbReference>
<dbReference type="Pfam" id="PF08264">
    <property type="entry name" value="Anticodon_1"/>
    <property type="match status" value="1"/>
</dbReference>
<dbReference type="Pfam" id="PF19302">
    <property type="entry name" value="DUF5915"/>
    <property type="match status" value="1"/>
</dbReference>
<dbReference type="Pfam" id="PF00133">
    <property type="entry name" value="tRNA-synt_1"/>
    <property type="match status" value="1"/>
</dbReference>
<dbReference type="PRINTS" id="PR00984">
    <property type="entry name" value="TRNASYNTHILE"/>
</dbReference>
<dbReference type="SUPFAM" id="SSF47323">
    <property type="entry name" value="Anticodon-binding domain of a subclass of class I aminoacyl-tRNA synthetases"/>
    <property type="match status" value="1"/>
</dbReference>
<dbReference type="SUPFAM" id="SSF52374">
    <property type="entry name" value="Nucleotidylyl transferase"/>
    <property type="match status" value="1"/>
</dbReference>
<dbReference type="SUPFAM" id="SSF50677">
    <property type="entry name" value="ValRS/IleRS/LeuRS editing domain"/>
    <property type="match status" value="1"/>
</dbReference>
<dbReference type="PROSITE" id="PS00178">
    <property type="entry name" value="AA_TRNA_LIGASE_I"/>
    <property type="match status" value="1"/>
</dbReference>
<comment type="function">
    <text evidence="1">Catalyzes the attachment of isoleucine to tRNA(Ile). As IleRS can inadvertently accommodate and process structurally similar amino acids such as valine, to avoid such errors it has two additional distinct tRNA(Ile)-dependent editing activities. One activity is designated as 'pretransfer' editing and involves the hydrolysis of activated Val-AMP. The other activity is designated 'posttransfer' editing and involves deacylation of mischarged Val-tRNA(Ile).</text>
</comment>
<comment type="catalytic activity">
    <reaction evidence="1">
        <text>tRNA(Ile) + L-isoleucine + ATP = L-isoleucyl-tRNA(Ile) + AMP + diphosphate</text>
        <dbReference type="Rhea" id="RHEA:11060"/>
        <dbReference type="Rhea" id="RHEA-COMP:9666"/>
        <dbReference type="Rhea" id="RHEA-COMP:9695"/>
        <dbReference type="ChEBI" id="CHEBI:30616"/>
        <dbReference type="ChEBI" id="CHEBI:33019"/>
        <dbReference type="ChEBI" id="CHEBI:58045"/>
        <dbReference type="ChEBI" id="CHEBI:78442"/>
        <dbReference type="ChEBI" id="CHEBI:78528"/>
        <dbReference type="ChEBI" id="CHEBI:456215"/>
        <dbReference type="EC" id="6.1.1.5"/>
    </reaction>
</comment>
<comment type="cofactor">
    <cofactor evidence="1">
        <name>Zn(2+)</name>
        <dbReference type="ChEBI" id="CHEBI:29105"/>
    </cofactor>
</comment>
<comment type="subunit">
    <text evidence="1">Monomer.</text>
</comment>
<comment type="subcellular location">
    <subcellularLocation>
        <location evidence="1">Cytoplasm</location>
    </subcellularLocation>
</comment>
<comment type="domain">
    <text evidence="1">IleRS has two distinct active sites: one for aminoacylation and one for editing. The misactivated valine is translocated from the active site to the editing site, which sterically excludes the correctly activated isoleucine. The single editing site contains two valyl binding pockets, one specific for each substrate (Val-AMP or Val-tRNA(Ile)).</text>
</comment>
<comment type="similarity">
    <text evidence="1">Belongs to the class-I aminoacyl-tRNA synthetase family. IleS type 2 subfamily.</text>
</comment>
<comment type="sequence caution" evidence="2">
    <conflict type="erroneous initiation">
        <sequence resource="EMBL-CDS" id="AAL03491"/>
    </conflict>
</comment>
<sequence length="1092" mass="125342">MTNTKYYPEVSSNADFAGLEREILKFWQDNNIFQKSIDDRNGESEFIFYDGPPFANGLPHYGHLLTGFIKDVYARYQTIKGKKVERRFGWDCHGLPAEMQSEKELGISGRLAIANFGIEKFNAHCRASVMKYANDWEEYVTRQARWVDFKNSYKTMDKNFMESVLWAFKELYNKGLLYESMRVMPYSWACETPLSNFETRLDNSYRERADKAVTVSFVLSHPVTTTTGSFKEYRILAWTTTPWTLPSNLALAVGSDIDYALVPKNDVCYIIAAYSVSKYAKELGLSGEENFEIIKGSALQGLNYKSLFDYFENHPNSFKIFAGDFVVEGDGTGVVHMAPGFGEDDQILCESKGIELVCPVDNSGKFTKEIPDLEGLQVFDANDKIIIKLKEQGNWLKTEQYIHNYPHCWRTDTPLIYKAVPSWYVKVTQFKDRMVELNQQINWIPFHVKDNLFGKWLENARDWSISRNRFWGTPLPVWKSDDPKYPRIDVYGSIEELEKDFGVKVTDLHRPFIDELTRPNPDDPTGKSTMRRIEDVFDCWFESGSMPYGQAHYPFENKEWFEDHFPADFIVEYSAQTRGWFYTLMVLSTALFDRPPFLNCICHGVILDSTGQKLSKRLNNYADPLELFDKYGSDALRVTMLSSNVVKGQELLIDKDGKMVFDTLRLFIKPIWNAYHFFTMYANADSLKGKLNFSSKNVLDVYILSKLKIAVQKIEESLDNFDTQTAYHAVSAFFEVLNNWYIRRSRARFWKSAKDTDKQNAYNTLYSCLDTMAIAMSALVPMISEAIYKGLRHCEERNDTALSGKSNIIARKDTSLDKAISGVSHKIATALSVPRNDAISVHLCNYPTLSDFEINHELVATMDNVLDICSNSLFIRSTENIRVRQPLASIAIISKHNNNLKDFEDLIKDEINVKAVIYRDDLENYASKKLSINFPMLGKRLPHKMKEIIAASKKGEWEAITGGLAICGETLNSDEYKLVLEPYSHIKGAASFENNSSLLILDLELTPELIEEGYARDIVRFIQQARKDADFSITDRILIEIISEFNLSKIIDNYGDFIKEQTLGEFAKNFTPDYVSKVALENHQIQLKVKKS</sequence>
<protein>
    <recommendedName>
        <fullName evidence="1">Isoleucine--tRNA ligase</fullName>
        <ecNumber evidence="1">6.1.1.5</ecNumber>
    </recommendedName>
    <alternativeName>
        <fullName evidence="1">Isoleucyl-tRNA synthetase</fullName>
        <shortName evidence="1">IleRS</shortName>
    </alternativeName>
</protein>
<gene>
    <name evidence="1" type="primary">ileS</name>
    <name type="ordered locus">RC0953</name>
</gene>
<name>SYI_RICCN</name>
<organism>
    <name type="scientific">Rickettsia conorii (strain ATCC VR-613 / Malish 7)</name>
    <dbReference type="NCBI Taxonomy" id="272944"/>
    <lineage>
        <taxon>Bacteria</taxon>
        <taxon>Pseudomonadati</taxon>
        <taxon>Pseudomonadota</taxon>
        <taxon>Alphaproteobacteria</taxon>
        <taxon>Rickettsiales</taxon>
        <taxon>Rickettsiaceae</taxon>
        <taxon>Rickettsieae</taxon>
        <taxon>Rickettsia</taxon>
        <taxon>spotted fever group</taxon>
    </lineage>
</organism>
<evidence type="ECO:0000255" key="1">
    <source>
        <dbReference type="HAMAP-Rule" id="MF_02003"/>
    </source>
</evidence>
<evidence type="ECO:0000305" key="2"/>
<proteinExistence type="inferred from homology"/>
<feature type="chain" id="PRO_0000098558" description="Isoleucine--tRNA ligase">
    <location>
        <begin position="1"/>
        <end position="1092"/>
    </location>
</feature>
<feature type="short sequence motif" description="'HIGH' region">
    <location>
        <begin position="53"/>
        <end position="63"/>
    </location>
</feature>
<feature type="short sequence motif" description="'KMSKS' region">
    <location>
        <begin position="613"/>
        <end position="617"/>
    </location>
</feature>
<feature type="binding site" evidence="1">
    <location>
        <position position="616"/>
    </location>
    <ligand>
        <name>ATP</name>
        <dbReference type="ChEBI" id="CHEBI:30616"/>
    </ligand>
</feature>
<accession>Q92H19</accession>
<keyword id="KW-0030">Aminoacyl-tRNA synthetase</keyword>
<keyword id="KW-0067">ATP-binding</keyword>
<keyword id="KW-0963">Cytoplasm</keyword>
<keyword id="KW-0436">Ligase</keyword>
<keyword id="KW-0479">Metal-binding</keyword>
<keyword id="KW-0547">Nucleotide-binding</keyword>
<keyword id="KW-0648">Protein biosynthesis</keyword>
<keyword id="KW-0862">Zinc</keyword>
<reference key="1">
    <citation type="journal article" date="2001" name="Science">
        <title>Mechanisms of evolution in Rickettsia conorii and R. prowazekii.</title>
        <authorList>
            <person name="Ogata H."/>
            <person name="Audic S."/>
            <person name="Renesto-Audiffren P."/>
            <person name="Fournier P.-E."/>
            <person name="Barbe V."/>
            <person name="Samson D."/>
            <person name="Roux V."/>
            <person name="Cossart P."/>
            <person name="Weissenbach J."/>
            <person name="Claverie J.-M."/>
            <person name="Raoult D."/>
        </authorList>
    </citation>
    <scope>NUCLEOTIDE SEQUENCE [LARGE SCALE GENOMIC DNA]</scope>
    <source>
        <strain>ATCC VR-613 / Malish 7</strain>
    </source>
</reference>